<dbReference type="EMBL" id="CP000031">
    <property type="protein sequence ID" value="AAV94109.1"/>
    <property type="molecule type" value="Genomic_DNA"/>
</dbReference>
<dbReference type="RefSeq" id="WP_011046553.1">
    <property type="nucleotide sequence ID" value="NC_003911.12"/>
</dbReference>
<dbReference type="SMR" id="Q5LV98"/>
<dbReference type="STRING" id="246200.SPO0804"/>
<dbReference type="PaxDb" id="246200-SPO0804"/>
<dbReference type="KEGG" id="sil:SPO0804"/>
<dbReference type="eggNOG" id="COG0776">
    <property type="taxonomic scope" value="Bacteria"/>
</dbReference>
<dbReference type="HOGENOM" id="CLU_105066_2_0_5"/>
<dbReference type="OrthoDB" id="9804203at2"/>
<dbReference type="Proteomes" id="UP000001023">
    <property type="component" value="Chromosome"/>
</dbReference>
<dbReference type="GO" id="GO:0005694">
    <property type="term" value="C:chromosome"/>
    <property type="evidence" value="ECO:0007669"/>
    <property type="project" value="InterPro"/>
</dbReference>
<dbReference type="GO" id="GO:0005829">
    <property type="term" value="C:cytosol"/>
    <property type="evidence" value="ECO:0007669"/>
    <property type="project" value="TreeGrafter"/>
</dbReference>
<dbReference type="GO" id="GO:0003677">
    <property type="term" value="F:DNA binding"/>
    <property type="evidence" value="ECO:0007669"/>
    <property type="project" value="UniProtKB-UniRule"/>
</dbReference>
<dbReference type="GO" id="GO:0030527">
    <property type="term" value="F:structural constituent of chromatin"/>
    <property type="evidence" value="ECO:0007669"/>
    <property type="project" value="InterPro"/>
</dbReference>
<dbReference type="GO" id="GO:0006310">
    <property type="term" value="P:DNA recombination"/>
    <property type="evidence" value="ECO:0007669"/>
    <property type="project" value="UniProtKB-UniRule"/>
</dbReference>
<dbReference type="GO" id="GO:0006355">
    <property type="term" value="P:regulation of DNA-templated transcription"/>
    <property type="evidence" value="ECO:0007669"/>
    <property type="project" value="UniProtKB-UniRule"/>
</dbReference>
<dbReference type="GO" id="GO:0006417">
    <property type="term" value="P:regulation of translation"/>
    <property type="evidence" value="ECO:0007669"/>
    <property type="project" value="UniProtKB-UniRule"/>
</dbReference>
<dbReference type="CDD" id="cd13836">
    <property type="entry name" value="IHF_B"/>
    <property type="match status" value="1"/>
</dbReference>
<dbReference type="Gene3D" id="4.10.520.10">
    <property type="entry name" value="IHF-like DNA-binding proteins"/>
    <property type="match status" value="1"/>
</dbReference>
<dbReference type="HAMAP" id="MF_00381">
    <property type="entry name" value="IHF_beta"/>
    <property type="match status" value="1"/>
</dbReference>
<dbReference type="InterPro" id="IPR000119">
    <property type="entry name" value="Hist_DNA-bd"/>
</dbReference>
<dbReference type="InterPro" id="IPR020816">
    <property type="entry name" value="Histone-like_DNA-bd_CS"/>
</dbReference>
<dbReference type="InterPro" id="IPR010992">
    <property type="entry name" value="IHF-like_DNA-bd_dom_sf"/>
</dbReference>
<dbReference type="InterPro" id="IPR005685">
    <property type="entry name" value="IHF_beta"/>
</dbReference>
<dbReference type="NCBIfam" id="TIGR00988">
    <property type="entry name" value="hip"/>
    <property type="match status" value="1"/>
</dbReference>
<dbReference type="NCBIfam" id="NF001222">
    <property type="entry name" value="PRK00199.1"/>
    <property type="match status" value="1"/>
</dbReference>
<dbReference type="PANTHER" id="PTHR33175">
    <property type="entry name" value="DNA-BINDING PROTEIN HU"/>
    <property type="match status" value="1"/>
</dbReference>
<dbReference type="PANTHER" id="PTHR33175:SF5">
    <property type="entry name" value="INTEGRATION HOST FACTOR SUBUNIT BETA"/>
    <property type="match status" value="1"/>
</dbReference>
<dbReference type="Pfam" id="PF00216">
    <property type="entry name" value="Bac_DNA_binding"/>
    <property type="match status" value="1"/>
</dbReference>
<dbReference type="PRINTS" id="PR01727">
    <property type="entry name" value="DNABINDINGHU"/>
</dbReference>
<dbReference type="SMART" id="SM00411">
    <property type="entry name" value="BHL"/>
    <property type="match status" value="1"/>
</dbReference>
<dbReference type="SUPFAM" id="SSF47729">
    <property type="entry name" value="IHF-like DNA-binding proteins"/>
    <property type="match status" value="1"/>
</dbReference>
<dbReference type="PROSITE" id="PS00045">
    <property type="entry name" value="HISTONE_LIKE"/>
    <property type="match status" value="1"/>
</dbReference>
<reference key="1">
    <citation type="journal article" date="2004" name="Nature">
        <title>Genome sequence of Silicibacter pomeroyi reveals adaptations to the marine environment.</title>
        <authorList>
            <person name="Moran M.A."/>
            <person name="Buchan A."/>
            <person name="Gonzalez J.M."/>
            <person name="Heidelberg J.F."/>
            <person name="Whitman W.B."/>
            <person name="Kiene R.P."/>
            <person name="Henriksen J.R."/>
            <person name="King G.M."/>
            <person name="Belas R."/>
            <person name="Fuqua C."/>
            <person name="Brinkac L.M."/>
            <person name="Lewis M."/>
            <person name="Johri S."/>
            <person name="Weaver B."/>
            <person name="Pai G."/>
            <person name="Eisen J.A."/>
            <person name="Rahe E."/>
            <person name="Sheldon W.M."/>
            <person name="Ye W."/>
            <person name="Miller T.R."/>
            <person name="Carlton J."/>
            <person name="Rasko D.A."/>
            <person name="Paulsen I.T."/>
            <person name="Ren Q."/>
            <person name="Daugherty S.C."/>
            <person name="DeBoy R.T."/>
            <person name="Dodson R.J."/>
            <person name="Durkin A.S."/>
            <person name="Madupu R."/>
            <person name="Nelson W.C."/>
            <person name="Sullivan S.A."/>
            <person name="Rosovitz M.J."/>
            <person name="Haft D.H."/>
            <person name="Selengut J."/>
            <person name="Ward N."/>
        </authorList>
    </citation>
    <scope>NUCLEOTIDE SEQUENCE [LARGE SCALE GENOMIC DNA]</scope>
    <source>
        <strain>ATCC 700808 / DSM 15171 / DSS-3</strain>
    </source>
</reference>
<reference key="2">
    <citation type="journal article" date="2014" name="Stand. Genomic Sci.">
        <title>An updated genome annotation for the model marine bacterium Ruegeria pomeroyi DSS-3.</title>
        <authorList>
            <person name="Rivers A.R."/>
            <person name="Smith C.B."/>
            <person name="Moran M.A."/>
        </authorList>
    </citation>
    <scope>GENOME REANNOTATION</scope>
    <source>
        <strain>ATCC 700808 / DSM 15171 / DSS-3</strain>
    </source>
</reference>
<name>IHFB_RUEPO</name>
<keyword id="KW-0233">DNA recombination</keyword>
<keyword id="KW-0238">DNA-binding</keyword>
<keyword id="KW-1185">Reference proteome</keyword>
<keyword id="KW-0804">Transcription</keyword>
<keyword id="KW-0805">Transcription regulation</keyword>
<keyword id="KW-0810">Translation regulation</keyword>
<accession>Q5LV98</accession>
<evidence type="ECO:0000255" key="1">
    <source>
        <dbReference type="HAMAP-Rule" id="MF_00381"/>
    </source>
</evidence>
<organism>
    <name type="scientific">Ruegeria pomeroyi (strain ATCC 700808 / DSM 15171 / DSS-3)</name>
    <name type="common">Silicibacter pomeroyi</name>
    <dbReference type="NCBI Taxonomy" id="246200"/>
    <lineage>
        <taxon>Bacteria</taxon>
        <taxon>Pseudomonadati</taxon>
        <taxon>Pseudomonadota</taxon>
        <taxon>Alphaproteobacteria</taxon>
        <taxon>Rhodobacterales</taxon>
        <taxon>Roseobacteraceae</taxon>
        <taxon>Ruegeria</taxon>
    </lineage>
</organism>
<proteinExistence type="inferred from homology"/>
<feature type="chain" id="PRO_1000060669" description="Integration host factor subunit beta">
    <location>
        <begin position="1"/>
        <end position="94"/>
    </location>
</feature>
<protein>
    <recommendedName>
        <fullName evidence="1">Integration host factor subunit beta</fullName>
        <shortName evidence="1">IHF-beta</shortName>
    </recommendedName>
</protein>
<sequence>MIRSELIQKIADENPHLYQRDVERIVNTVFEEVTDAMARGDRVELRGFGAFSVKKRDARIGRNPRTGDTVHVEEKHVPFFKTGKLLRDRLNGKA</sequence>
<gene>
    <name evidence="1" type="primary">ihfB</name>
    <name evidence="1" type="synonym">himD</name>
    <name type="ordered locus">SPO0804</name>
</gene>
<comment type="function">
    <text evidence="1">This protein is one of the two subunits of integration host factor, a specific DNA-binding protein that functions in genetic recombination as well as in transcriptional and translational control.</text>
</comment>
<comment type="subunit">
    <text evidence="1">Heterodimer of an alpha and a beta chain.</text>
</comment>
<comment type="similarity">
    <text evidence="1">Belongs to the bacterial histone-like protein family.</text>
</comment>